<dbReference type="EC" id="6.3.5.7" evidence="1"/>
<dbReference type="EMBL" id="CP000090">
    <property type="protein sequence ID" value="AAZ59456.1"/>
    <property type="molecule type" value="Genomic_DNA"/>
</dbReference>
<dbReference type="SMR" id="Q477H7"/>
<dbReference type="STRING" id="264198.Reut_A0074"/>
<dbReference type="KEGG" id="reu:Reut_A0074"/>
<dbReference type="eggNOG" id="COG0154">
    <property type="taxonomic scope" value="Bacteria"/>
</dbReference>
<dbReference type="HOGENOM" id="CLU_009600_0_3_4"/>
<dbReference type="OrthoDB" id="9811471at2"/>
<dbReference type="GO" id="GO:0030956">
    <property type="term" value="C:glutamyl-tRNA(Gln) amidotransferase complex"/>
    <property type="evidence" value="ECO:0007669"/>
    <property type="project" value="InterPro"/>
</dbReference>
<dbReference type="GO" id="GO:0005524">
    <property type="term" value="F:ATP binding"/>
    <property type="evidence" value="ECO:0007669"/>
    <property type="project" value="UniProtKB-KW"/>
</dbReference>
<dbReference type="GO" id="GO:0050567">
    <property type="term" value="F:glutaminyl-tRNA synthase (glutamine-hydrolyzing) activity"/>
    <property type="evidence" value="ECO:0007669"/>
    <property type="project" value="UniProtKB-UniRule"/>
</dbReference>
<dbReference type="GO" id="GO:0006412">
    <property type="term" value="P:translation"/>
    <property type="evidence" value="ECO:0007669"/>
    <property type="project" value="UniProtKB-UniRule"/>
</dbReference>
<dbReference type="Gene3D" id="3.90.1300.10">
    <property type="entry name" value="Amidase signature (AS) domain"/>
    <property type="match status" value="1"/>
</dbReference>
<dbReference type="HAMAP" id="MF_00120">
    <property type="entry name" value="GatA"/>
    <property type="match status" value="1"/>
</dbReference>
<dbReference type="InterPro" id="IPR000120">
    <property type="entry name" value="Amidase"/>
</dbReference>
<dbReference type="InterPro" id="IPR020556">
    <property type="entry name" value="Amidase_CS"/>
</dbReference>
<dbReference type="InterPro" id="IPR023631">
    <property type="entry name" value="Amidase_dom"/>
</dbReference>
<dbReference type="InterPro" id="IPR036928">
    <property type="entry name" value="AS_sf"/>
</dbReference>
<dbReference type="InterPro" id="IPR004412">
    <property type="entry name" value="GatA"/>
</dbReference>
<dbReference type="InterPro" id="IPR006594">
    <property type="entry name" value="LisH"/>
</dbReference>
<dbReference type="NCBIfam" id="TIGR00132">
    <property type="entry name" value="gatA"/>
    <property type="match status" value="1"/>
</dbReference>
<dbReference type="PANTHER" id="PTHR11895:SF151">
    <property type="entry name" value="GLUTAMYL-TRNA(GLN) AMIDOTRANSFERASE SUBUNIT A"/>
    <property type="match status" value="1"/>
</dbReference>
<dbReference type="PANTHER" id="PTHR11895">
    <property type="entry name" value="TRANSAMIDASE"/>
    <property type="match status" value="1"/>
</dbReference>
<dbReference type="Pfam" id="PF01425">
    <property type="entry name" value="Amidase"/>
    <property type="match status" value="1"/>
</dbReference>
<dbReference type="SUPFAM" id="SSF75304">
    <property type="entry name" value="Amidase signature (AS) enzymes"/>
    <property type="match status" value="1"/>
</dbReference>
<dbReference type="PROSITE" id="PS00571">
    <property type="entry name" value="AMIDASES"/>
    <property type="match status" value="1"/>
</dbReference>
<organism>
    <name type="scientific">Cupriavidus pinatubonensis (strain JMP 134 / LMG 1197)</name>
    <name type="common">Cupriavidus necator (strain JMP 134)</name>
    <dbReference type="NCBI Taxonomy" id="264198"/>
    <lineage>
        <taxon>Bacteria</taxon>
        <taxon>Pseudomonadati</taxon>
        <taxon>Pseudomonadota</taxon>
        <taxon>Betaproteobacteria</taxon>
        <taxon>Burkholderiales</taxon>
        <taxon>Burkholderiaceae</taxon>
        <taxon>Cupriavidus</taxon>
    </lineage>
</organism>
<feature type="chain" id="PRO_0000241140" description="Glutamyl-tRNA(Gln) amidotransferase subunit A">
    <location>
        <begin position="1"/>
        <end position="501"/>
    </location>
</feature>
<feature type="active site" description="Charge relay system" evidence="1">
    <location>
        <position position="80"/>
    </location>
</feature>
<feature type="active site" description="Charge relay system" evidence="1">
    <location>
        <position position="155"/>
    </location>
</feature>
<feature type="active site" description="Acyl-ester intermediate" evidence="1">
    <location>
        <position position="179"/>
    </location>
</feature>
<proteinExistence type="inferred from homology"/>
<accession>Q477H7</accession>
<evidence type="ECO:0000255" key="1">
    <source>
        <dbReference type="HAMAP-Rule" id="MF_00120"/>
    </source>
</evidence>
<comment type="function">
    <text evidence="1">Allows the formation of correctly charged Gln-tRNA(Gln) through the transamidation of misacylated Glu-tRNA(Gln) in organisms which lack glutaminyl-tRNA synthetase. The reaction takes place in the presence of glutamine and ATP through an activated gamma-phospho-Glu-tRNA(Gln).</text>
</comment>
<comment type="catalytic activity">
    <reaction evidence="1">
        <text>L-glutamyl-tRNA(Gln) + L-glutamine + ATP + H2O = L-glutaminyl-tRNA(Gln) + L-glutamate + ADP + phosphate + H(+)</text>
        <dbReference type="Rhea" id="RHEA:17521"/>
        <dbReference type="Rhea" id="RHEA-COMP:9681"/>
        <dbReference type="Rhea" id="RHEA-COMP:9684"/>
        <dbReference type="ChEBI" id="CHEBI:15377"/>
        <dbReference type="ChEBI" id="CHEBI:15378"/>
        <dbReference type="ChEBI" id="CHEBI:29985"/>
        <dbReference type="ChEBI" id="CHEBI:30616"/>
        <dbReference type="ChEBI" id="CHEBI:43474"/>
        <dbReference type="ChEBI" id="CHEBI:58359"/>
        <dbReference type="ChEBI" id="CHEBI:78520"/>
        <dbReference type="ChEBI" id="CHEBI:78521"/>
        <dbReference type="ChEBI" id="CHEBI:456216"/>
        <dbReference type="EC" id="6.3.5.7"/>
    </reaction>
</comment>
<comment type="subunit">
    <text evidence="1">Heterotrimer of A, B and C subunits.</text>
</comment>
<comment type="similarity">
    <text evidence="1">Belongs to the amidase family. GatA subfamily.</text>
</comment>
<reference key="1">
    <citation type="journal article" date="2010" name="PLoS ONE">
        <title>The complete multipartite genome sequence of Cupriavidus necator JMP134, a versatile pollutant degrader.</title>
        <authorList>
            <person name="Lykidis A."/>
            <person name="Perez-Pantoja D."/>
            <person name="Ledger T."/>
            <person name="Mavromatis K."/>
            <person name="Anderson I.J."/>
            <person name="Ivanova N.N."/>
            <person name="Hooper S.D."/>
            <person name="Lapidus A."/>
            <person name="Lucas S."/>
            <person name="Gonzalez B."/>
            <person name="Kyrpides N.C."/>
        </authorList>
    </citation>
    <scope>NUCLEOTIDE SEQUENCE [LARGE SCALE GENOMIC DNA]</scope>
    <source>
        <strain>JMP134 / LMG 1197</strain>
    </source>
</reference>
<name>GATA_CUPPJ</name>
<protein>
    <recommendedName>
        <fullName evidence="1">Glutamyl-tRNA(Gln) amidotransferase subunit A</fullName>
        <shortName evidence="1">Glu-ADT subunit A</shortName>
        <ecNumber evidence="1">6.3.5.7</ecNumber>
    </recommendedName>
</protein>
<keyword id="KW-0067">ATP-binding</keyword>
<keyword id="KW-0436">Ligase</keyword>
<keyword id="KW-0547">Nucleotide-binding</keyword>
<keyword id="KW-0648">Protein biosynthesis</keyword>
<gene>
    <name evidence="1" type="primary">gatA</name>
    <name type="ordered locus">Reut_A0074</name>
</gene>
<sequence length="501" mass="53677">MPFSADSVTSLRQLADALAARSVSAEELARTYLARIEQAGALNAFTHVDAERTLAQAREADARRARGEATLLTGVPVAHKDVFVTRGWRATAGSKMLANYESPFDATVVERMAAAGMVTLGKTNMDEFAMGSSNENSFFGAVRNPWDTDRVPGGSSGGSAAAVAAGLAPAATGTDTGGSIRQPSSFSGITGIKPTYGRVSRYGMIAFASSLDQGGPMAHTAEDCALLLNAMAGFDAKDSTSIPPEQGGVDEDFARYLGQPRAGASESQPLAGLRIGLPREYFGKGLSPDVEETVRAALRQYEQLGATLVEVSLPKTELSIPVYYVIAPAEASSNLSRFDGVRYGHRAAEYRDLLDMYKKSRAEGFGAEVKRRIMVGTYVLSHGYYDAYYLQAQKIRRIIADDFQRAFAQCDVIMGPVAPTVAWKLGEKTSDPVQMYLADIFTLSTSLAGLPGMSVPCGFGDGNMPVGLQLIGNYFDEARLLQTAHAFQQATDWHLRRPAKA</sequence>